<feature type="chain" id="PRO_1000148469" description="Probable flagellum biosynthesis repressor protein FlbT">
    <location>
        <begin position="1"/>
        <end position="149"/>
    </location>
</feature>
<proteinExistence type="inferred from homology"/>
<comment type="function">
    <text evidence="1">Has a post-transcriptional repressor function in flagellum biogenesis. Associates with the 5'-UTR of fljK mRNA and promotes its degradation.</text>
</comment>
<comment type="similarity">
    <text evidence="1">Belongs to the FlbT family.</text>
</comment>
<sequence>MKSTLRISLKSGERIFINGAVLRVDRKVALEFLNDVTFLLENHVLQPEDANTPLRQLYFIAQMILINPEGKEQTLTMFRKSIVMLLSCFQDDEILAELKRIDAQVVSGRAFDALKAIRGLYPLEDRILNNQEMAPATIEQIRKEIAPWR</sequence>
<accession>B9JRR8</accession>
<name>FLBT_ALLAM</name>
<evidence type="ECO:0000255" key="1">
    <source>
        <dbReference type="HAMAP-Rule" id="MF_00783"/>
    </source>
</evidence>
<protein>
    <recommendedName>
        <fullName evidence="1">Probable flagellum biosynthesis repressor protein FlbT</fullName>
    </recommendedName>
</protein>
<organism>
    <name type="scientific">Allorhizobium ampelinum (strain ATCC BAA-846 / DSM 112012 / S4)</name>
    <name type="common">Agrobacterium vitis (strain S4)</name>
    <dbReference type="NCBI Taxonomy" id="311402"/>
    <lineage>
        <taxon>Bacteria</taxon>
        <taxon>Pseudomonadati</taxon>
        <taxon>Pseudomonadota</taxon>
        <taxon>Alphaproteobacteria</taxon>
        <taxon>Hyphomicrobiales</taxon>
        <taxon>Rhizobiaceae</taxon>
        <taxon>Rhizobium/Agrobacterium group</taxon>
        <taxon>Allorhizobium</taxon>
        <taxon>Allorhizobium ampelinum</taxon>
    </lineage>
</organism>
<keyword id="KW-1005">Bacterial flagellum biogenesis</keyword>
<keyword id="KW-1185">Reference proteome</keyword>
<keyword id="KW-0678">Repressor</keyword>
<keyword id="KW-0694">RNA-binding</keyword>
<gene>
    <name evidence="1" type="primary">flbT</name>
    <name type="ordered locus">Avi_0768</name>
</gene>
<dbReference type="EMBL" id="CP000633">
    <property type="protein sequence ID" value="ACM35544.1"/>
    <property type="molecule type" value="Genomic_DNA"/>
</dbReference>
<dbReference type="RefSeq" id="WP_015914969.1">
    <property type="nucleotide sequence ID" value="NC_011989.1"/>
</dbReference>
<dbReference type="STRING" id="311402.Avi_0768"/>
<dbReference type="KEGG" id="avi:Avi_0768"/>
<dbReference type="eggNOG" id="COG5443">
    <property type="taxonomic scope" value="Bacteria"/>
</dbReference>
<dbReference type="HOGENOM" id="CLU_130913_1_0_5"/>
<dbReference type="Proteomes" id="UP000001596">
    <property type="component" value="Chromosome 1"/>
</dbReference>
<dbReference type="GO" id="GO:0048027">
    <property type="term" value="F:mRNA 5'-UTR binding"/>
    <property type="evidence" value="ECO:0007669"/>
    <property type="project" value="UniProtKB-UniRule"/>
</dbReference>
<dbReference type="GO" id="GO:0044781">
    <property type="term" value="P:bacterial-type flagellum organization"/>
    <property type="evidence" value="ECO:0007669"/>
    <property type="project" value="UniProtKB-KW"/>
</dbReference>
<dbReference type="GO" id="GO:0006402">
    <property type="term" value="P:mRNA catabolic process"/>
    <property type="evidence" value="ECO:0007669"/>
    <property type="project" value="InterPro"/>
</dbReference>
<dbReference type="GO" id="GO:1902209">
    <property type="term" value="P:negative regulation of bacterial-type flagellum assembly"/>
    <property type="evidence" value="ECO:0007669"/>
    <property type="project" value="UniProtKB-UniRule"/>
</dbReference>
<dbReference type="HAMAP" id="MF_00783">
    <property type="entry name" value="FlbT"/>
    <property type="match status" value="1"/>
</dbReference>
<dbReference type="InterPro" id="IPR009967">
    <property type="entry name" value="Flagellum_FlbT"/>
</dbReference>
<dbReference type="NCBIfam" id="NF001995">
    <property type="entry name" value="PRK00794.1-1"/>
    <property type="match status" value="1"/>
</dbReference>
<dbReference type="Pfam" id="PF07378">
    <property type="entry name" value="FlbT"/>
    <property type="match status" value="1"/>
</dbReference>
<dbReference type="PIRSF" id="PIRSF009533">
    <property type="entry name" value="FlbT"/>
    <property type="match status" value="1"/>
</dbReference>
<reference key="1">
    <citation type="journal article" date="2009" name="J. Bacteriol.">
        <title>Genome sequences of three Agrobacterium biovars help elucidate the evolution of multichromosome genomes in bacteria.</title>
        <authorList>
            <person name="Slater S.C."/>
            <person name="Goldman B.S."/>
            <person name="Goodner B."/>
            <person name="Setubal J.C."/>
            <person name="Farrand S.K."/>
            <person name="Nester E.W."/>
            <person name="Burr T.J."/>
            <person name="Banta L."/>
            <person name="Dickerman A.W."/>
            <person name="Paulsen I."/>
            <person name="Otten L."/>
            <person name="Suen G."/>
            <person name="Welch R."/>
            <person name="Almeida N.F."/>
            <person name="Arnold F."/>
            <person name="Burton O.T."/>
            <person name="Du Z."/>
            <person name="Ewing A."/>
            <person name="Godsy E."/>
            <person name="Heisel S."/>
            <person name="Houmiel K.L."/>
            <person name="Jhaveri J."/>
            <person name="Lu J."/>
            <person name="Miller N.M."/>
            <person name="Norton S."/>
            <person name="Chen Q."/>
            <person name="Phoolcharoen W."/>
            <person name="Ohlin V."/>
            <person name="Ondrusek D."/>
            <person name="Pride N."/>
            <person name="Stricklin S.L."/>
            <person name="Sun J."/>
            <person name="Wheeler C."/>
            <person name="Wilson L."/>
            <person name="Zhu H."/>
            <person name="Wood D.W."/>
        </authorList>
    </citation>
    <scope>NUCLEOTIDE SEQUENCE [LARGE SCALE GENOMIC DNA]</scope>
    <source>
        <strain>ATCC BAA-846 / DSM 112012 / S4</strain>
    </source>
</reference>